<protein>
    <recommendedName>
        <fullName evidence="1">Chaperone protein HtpG</fullName>
    </recommendedName>
    <alternativeName>
        <fullName evidence="1">Heat shock protein HtpG</fullName>
    </alternativeName>
    <alternativeName>
        <fullName evidence="1">High temperature protein G</fullName>
    </alternativeName>
</protein>
<name>HTPG_BURMA</name>
<gene>
    <name evidence="1" type="primary">htpG</name>
    <name type="ordered locus">BMA1947</name>
</gene>
<keyword id="KW-0067">ATP-binding</keyword>
<keyword id="KW-0143">Chaperone</keyword>
<keyword id="KW-0963">Cytoplasm</keyword>
<keyword id="KW-0547">Nucleotide-binding</keyword>
<keyword id="KW-1185">Reference proteome</keyword>
<keyword id="KW-0346">Stress response</keyword>
<accession>Q62ID1</accession>
<feature type="chain" id="PRO_0000224199" description="Chaperone protein HtpG">
    <location>
        <begin position="1"/>
        <end position="632"/>
    </location>
</feature>
<feature type="region of interest" description="A; substrate-binding" evidence="1">
    <location>
        <begin position="1"/>
        <end position="339"/>
    </location>
</feature>
<feature type="region of interest" description="B" evidence="1">
    <location>
        <begin position="340"/>
        <end position="559"/>
    </location>
</feature>
<feature type="region of interest" description="C" evidence="1">
    <location>
        <begin position="560"/>
        <end position="632"/>
    </location>
</feature>
<evidence type="ECO:0000255" key="1">
    <source>
        <dbReference type="HAMAP-Rule" id="MF_00505"/>
    </source>
</evidence>
<sequence length="632" mass="71149">MTQQTMSFQAEVKQLLHLMIHSLYSNKEIFLRELVSNASDAADKLRFEALENNALYESDPNLRIRLSFDKAARTITIDDNGIGMSRDEAIANLGTIARSGTKEFFSKLSGDQQKDAALIGQFGVGFYSGFIVADRITVETRRAGLPASEGVRWESAGEGDFQVDTIERAARGTTITLHLREGEDELLSSYRLKSIVQKYSDHVALPILMKKEEWDQEKGEMVEKDEDETINQASALWTRAKSEVTDEQYKQFYQHVAHDHQDPLAWTHNRVEGRSEYTQLLFVPSHAPFDLWNRDYRGGLKLYVKRVFIMDDAEQLLPQYLRFIKGVVDSSDLPLNVSREILQESRDVKAIREGVTKRALSMLEELANAEDDAGKEKYKTFWSAFGQVLKEGVGEDHANRERVAKLLRFASTHGDTDAQDVALADYVARMKPEQTKIYYVTADTWQAAKNSPHLEVFRKKGVEVLLLTDRVDEWMLSFLHEFDGKPLASVARGDLDLGALNDDEKKAQEETGEAMKPVVDKMKETLGEKVKDVRVTFRLTDSPSCLVADDNDMSGYLQRMLKAAGQSAPSFQPILEINPEHPLVKALKADGADFGDWCHLLFDQALLAEGGALEDPASFVKRTNALLLSRAA</sequence>
<reference key="1">
    <citation type="journal article" date="2004" name="Proc. Natl. Acad. Sci. U.S.A.">
        <title>Structural flexibility in the Burkholderia mallei genome.</title>
        <authorList>
            <person name="Nierman W.C."/>
            <person name="DeShazer D."/>
            <person name="Kim H.S."/>
            <person name="Tettelin H."/>
            <person name="Nelson K.E."/>
            <person name="Feldblyum T.V."/>
            <person name="Ulrich R.L."/>
            <person name="Ronning C.M."/>
            <person name="Brinkac L.M."/>
            <person name="Daugherty S.C."/>
            <person name="Davidsen T.D."/>
            <person name="DeBoy R.T."/>
            <person name="Dimitrov G."/>
            <person name="Dodson R.J."/>
            <person name="Durkin A.S."/>
            <person name="Gwinn M.L."/>
            <person name="Haft D.H."/>
            <person name="Khouri H.M."/>
            <person name="Kolonay J.F."/>
            <person name="Madupu R."/>
            <person name="Mohammoud Y."/>
            <person name="Nelson W.C."/>
            <person name="Radune D."/>
            <person name="Romero C.M."/>
            <person name="Sarria S."/>
            <person name="Selengut J."/>
            <person name="Shamblin C."/>
            <person name="Sullivan S.A."/>
            <person name="White O."/>
            <person name="Yu Y."/>
            <person name="Zafar N."/>
            <person name="Zhou L."/>
            <person name="Fraser C.M."/>
        </authorList>
    </citation>
    <scope>NUCLEOTIDE SEQUENCE [LARGE SCALE GENOMIC DNA]</scope>
    <source>
        <strain>ATCC 23344</strain>
    </source>
</reference>
<proteinExistence type="inferred from homology"/>
<organism>
    <name type="scientific">Burkholderia mallei (strain ATCC 23344)</name>
    <dbReference type="NCBI Taxonomy" id="243160"/>
    <lineage>
        <taxon>Bacteria</taxon>
        <taxon>Pseudomonadati</taxon>
        <taxon>Pseudomonadota</taxon>
        <taxon>Betaproteobacteria</taxon>
        <taxon>Burkholderiales</taxon>
        <taxon>Burkholderiaceae</taxon>
        <taxon>Burkholderia</taxon>
        <taxon>pseudomallei group</taxon>
    </lineage>
</organism>
<dbReference type="EMBL" id="CP000010">
    <property type="protein sequence ID" value="AAU49908.1"/>
    <property type="molecule type" value="Genomic_DNA"/>
</dbReference>
<dbReference type="RefSeq" id="WP_004185742.1">
    <property type="nucleotide sequence ID" value="NC_006348.1"/>
</dbReference>
<dbReference type="RefSeq" id="YP_103539.1">
    <property type="nucleotide sequence ID" value="NC_006348.1"/>
</dbReference>
<dbReference type="SMR" id="Q62ID1"/>
<dbReference type="GeneID" id="93059584"/>
<dbReference type="KEGG" id="bma:BMA1947"/>
<dbReference type="PATRIC" id="fig|243160.12.peg.2014"/>
<dbReference type="eggNOG" id="COG0326">
    <property type="taxonomic scope" value="Bacteria"/>
</dbReference>
<dbReference type="HOGENOM" id="CLU_006684_3_0_4"/>
<dbReference type="Proteomes" id="UP000006693">
    <property type="component" value="Chromosome 1"/>
</dbReference>
<dbReference type="GO" id="GO:0005737">
    <property type="term" value="C:cytoplasm"/>
    <property type="evidence" value="ECO:0007669"/>
    <property type="project" value="UniProtKB-SubCell"/>
</dbReference>
<dbReference type="GO" id="GO:0005524">
    <property type="term" value="F:ATP binding"/>
    <property type="evidence" value="ECO:0007669"/>
    <property type="project" value="UniProtKB-UniRule"/>
</dbReference>
<dbReference type="GO" id="GO:0016887">
    <property type="term" value="F:ATP hydrolysis activity"/>
    <property type="evidence" value="ECO:0007669"/>
    <property type="project" value="InterPro"/>
</dbReference>
<dbReference type="GO" id="GO:0140662">
    <property type="term" value="F:ATP-dependent protein folding chaperone"/>
    <property type="evidence" value="ECO:0007669"/>
    <property type="project" value="InterPro"/>
</dbReference>
<dbReference type="GO" id="GO:0051082">
    <property type="term" value="F:unfolded protein binding"/>
    <property type="evidence" value="ECO:0007669"/>
    <property type="project" value="UniProtKB-UniRule"/>
</dbReference>
<dbReference type="CDD" id="cd16927">
    <property type="entry name" value="HATPase_Hsp90-like"/>
    <property type="match status" value="1"/>
</dbReference>
<dbReference type="FunFam" id="3.30.230.80:FF:000002">
    <property type="entry name" value="Molecular chaperone HtpG"/>
    <property type="match status" value="1"/>
</dbReference>
<dbReference type="FunFam" id="3.30.565.10:FF:000009">
    <property type="entry name" value="Molecular chaperone HtpG"/>
    <property type="match status" value="1"/>
</dbReference>
<dbReference type="Gene3D" id="3.30.230.80">
    <property type="match status" value="1"/>
</dbReference>
<dbReference type="Gene3D" id="3.40.50.11260">
    <property type="match status" value="1"/>
</dbReference>
<dbReference type="Gene3D" id="1.20.120.790">
    <property type="entry name" value="Heat shock protein 90, C-terminal domain"/>
    <property type="match status" value="1"/>
</dbReference>
<dbReference type="Gene3D" id="3.30.565.10">
    <property type="entry name" value="Histidine kinase-like ATPase, C-terminal domain"/>
    <property type="match status" value="1"/>
</dbReference>
<dbReference type="HAMAP" id="MF_00505">
    <property type="entry name" value="HSP90"/>
    <property type="match status" value="1"/>
</dbReference>
<dbReference type="InterPro" id="IPR036890">
    <property type="entry name" value="HATPase_C_sf"/>
</dbReference>
<dbReference type="InterPro" id="IPR019805">
    <property type="entry name" value="Heat_shock_protein_90_CS"/>
</dbReference>
<dbReference type="InterPro" id="IPR037196">
    <property type="entry name" value="HSP90_C"/>
</dbReference>
<dbReference type="InterPro" id="IPR001404">
    <property type="entry name" value="Hsp90_fam"/>
</dbReference>
<dbReference type="InterPro" id="IPR020575">
    <property type="entry name" value="Hsp90_N"/>
</dbReference>
<dbReference type="InterPro" id="IPR020568">
    <property type="entry name" value="Ribosomal_Su5_D2-typ_SF"/>
</dbReference>
<dbReference type="NCBIfam" id="NF003555">
    <property type="entry name" value="PRK05218.1"/>
    <property type="match status" value="1"/>
</dbReference>
<dbReference type="PANTHER" id="PTHR11528">
    <property type="entry name" value="HEAT SHOCK PROTEIN 90 FAMILY MEMBER"/>
    <property type="match status" value="1"/>
</dbReference>
<dbReference type="Pfam" id="PF13589">
    <property type="entry name" value="HATPase_c_3"/>
    <property type="match status" value="1"/>
</dbReference>
<dbReference type="Pfam" id="PF00183">
    <property type="entry name" value="HSP90"/>
    <property type="match status" value="1"/>
</dbReference>
<dbReference type="PIRSF" id="PIRSF002583">
    <property type="entry name" value="Hsp90"/>
    <property type="match status" value="1"/>
</dbReference>
<dbReference type="PRINTS" id="PR00775">
    <property type="entry name" value="HEATSHOCK90"/>
</dbReference>
<dbReference type="SMART" id="SM00387">
    <property type="entry name" value="HATPase_c"/>
    <property type="match status" value="1"/>
</dbReference>
<dbReference type="SUPFAM" id="SSF55874">
    <property type="entry name" value="ATPase domain of HSP90 chaperone/DNA topoisomerase II/histidine kinase"/>
    <property type="match status" value="1"/>
</dbReference>
<dbReference type="SUPFAM" id="SSF110942">
    <property type="entry name" value="HSP90 C-terminal domain"/>
    <property type="match status" value="1"/>
</dbReference>
<dbReference type="SUPFAM" id="SSF54211">
    <property type="entry name" value="Ribosomal protein S5 domain 2-like"/>
    <property type="match status" value="1"/>
</dbReference>
<dbReference type="PROSITE" id="PS00298">
    <property type="entry name" value="HSP90"/>
    <property type="match status" value="1"/>
</dbReference>
<comment type="function">
    <text evidence="1">Molecular chaperone. Has ATPase activity.</text>
</comment>
<comment type="subunit">
    <text evidence="1">Homodimer.</text>
</comment>
<comment type="subcellular location">
    <subcellularLocation>
        <location evidence="1">Cytoplasm</location>
    </subcellularLocation>
</comment>
<comment type="similarity">
    <text evidence="1">Belongs to the heat shock protein 90 family.</text>
</comment>